<accession>P59457</accession>
<reference key="1">
    <citation type="journal article" date="2003" name="Proc. Natl. Acad. Sci. U.S.A.">
        <title>Reductive genome evolution in Buchnera aphidicola.</title>
        <authorList>
            <person name="van Ham R.C.H.J."/>
            <person name="Kamerbeek J."/>
            <person name="Palacios C."/>
            <person name="Rausell C."/>
            <person name="Abascal F."/>
            <person name="Bastolla U."/>
            <person name="Fernandez J.M."/>
            <person name="Jimenez L."/>
            <person name="Postigo M."/>
            <person name="Silva F.J."/>
            <person name="Tamames J."/>
            <person name="Viguera E."/>
            <person name="Latorre A."/>
            <person name="Valencia A."/>
            <person name="Moran F."/>
            <person name="Moya A."/>
        </authorList>
    </citation>
    <scope>NUCLEOTIDE SEQUENCE [LARGE SCALE GENOMIC DNA]</scope>
    <source>
        <strain>Bp</strain>
    </source>
</reference>
<proteinExistence type="inferred from homology"/>
<feature type="chain" id="PRO_0000098756" description="Tryptophan synthase alpha chain">
    <location>
        <begin position="1"/>
        <end position="269"/>
    </location>
</feature>
<feature type="active site" description="Proton acceptor" evidence="1">
    <location>
        <position position="50"/>
    </location>
</feature>
<feature type="active site" description="Proton acceptor" evidence="1">
    <location>
        <position position="61"/>
    </location>
</feature>
<organism>
    <name type="scientific">Buchnera aphidicola subsp. Baizongia pistaciae (strain Bp)</name>
    <dbReference type="NCBI Taxonomy" id="224915"/>
    <lineage>
        <taxon>Bacteria</taxon>
        <taxon>Pseudomonadati</taxon>
        <taxon>Pseudomonadota</taxon>
        <taxon>Gammaproteobacteria</taxon>
        <taxon>Enterobacterales</taxon>
        <taxon>Erwiniaceae</taxon>
        <taxon>Buchnera</taxon>
    </lineage>
</organism>
<comment type="function">
    <text evidence="1">The alpha subunit is responsible for the aldol cleavage of indoleglycerol phosphate to indole and glyceraldehyde 3-phosphate.</text>
</comment>
<comment type="catalytic activity">
    <reaction evidence="1">
        <text>(1S,2R)-1-C-(indol-3-yl)glycerol 3-phosphate + L-serine = D-glyceraldehyde 3-phosphate + L-tryptophan + H2O</text>
        <dbReference type="Rhea" id="RHEA:10532"/>
        <dbReference type="ChEBI" id="CHEBI:15377"/>
        <dbReference type="ChEBI" id="CHEBI:33384"/>
        <dbReference type="ChEBI" id="CHEBI:57912"/>
        <dbReference type="ChEBI" id="CHEBI:58866"/>
        <dbReference type="ChEBI" id="CHEBI:59776"/>
        <dbReference type="EC" id="4.2.1.20"/>
    </reaction>
</comment>
<comment type="pathway">
    <text evidence="1">Amino-acid biosynthesis; L-tryptophan biosynthesis; L-tryptophan from chorismate: step 5/5.</text>
</comment>
<comment type="subunit">
    <text evidence="1">Tetramer of two alpha and two beta chains.</text>
</comment>
<comment type="similarity">
    <text evidence="1">Belongs to the TrpA family.</text>
</comment>
<keyword id="KW-0028">Amino-acid biosynthesis</keyword>
<keyword id="KW-0057">Aromatic amino acid biosynthesis</keyword>
<keyword id="KW-0456">Lyase</keyword>
<keyword id="KW-1185">Reference proteome</keyword>
<keyword id="KW-0822">Tryptophan biosynthesis</keyword>
<dbReference type="EC" id="4.2.1.20" evidence="1"/>
<dbReference type="EMBL" id="AE016826">
    <property type="protein sequence ID" value="AAO26984.1"/>
    <property type="molecule type" value="Genomic_DNA"/>
</dbReference>
<dbReference type="RefSeq" id="WP_011091385.1">
    <property type="nucleotide sequence ID" value="NC_004545.1"/>
</dbReference>
<dbReference type="SMR" id="P59457"/>
<dbReference type="STRING" id="224915.bbp_257"/>
<dbReference type="KEGG" id="bab:bbp_257"/>
<dbReference type="eggNOG" id="COG0159">
    <property type="taxonomic scope" value="Bacteria"/>
</dbReference>
<dbReference type="HOGENOM" id="CLU_016734_0_4_6"/>
<dbReference type="OrthoDB" id="9804578at2"/>
<dbReference type="UniPathway" id="UPA00035">
    <property type="reaction ID" value="UER00044"/>
</dbReference>
<dbReference type="Proteomes" id="UP000000601">
    <property type="component" value="Chromosome"/>
</dbReference>
<dbReference type="GO" id="GO:0005829">
    <property type="term" value="C:cytosol"/>
    <property type="evidence" value="ECO:0007669"/>
    <property type="project" value="TreeGrafter"/>
</dbReference>
<dbReference type="GO" id="GO:0004834">
    <property type="term" value="F:tryptophan synthase activity"/>
    <property type="evidence" value="ECO:0007669"/>
    <property type="project" value="UniProtKB-UniRule"/>
</dbReference>
<dbReference type="CDD" id="cd04724">
    <property type="entry name" value="Tryptophan_synthase_alpha"/>
    <property type="match status" value="1"/>
</dbReference>
<dbReference type="FunFam" id="3.20.20.70:FF:000037">
    <property type="entry name" value="Tryptophan synthase alpha chain"/>
    <property type="match status" value="1"/>
</dbReference>
<dbReference type="Gene3D" id="3.20.20.70">
    <property type="entry name" value="Aldolase class I"/>
    <property type="match status" value="1"/>
</dbReference>
<dbReference type="HAMAP" id="MF_00131">
    <property type="entry name" value="Trp_synth_alpha"/>
    <property type="match status" value="1"/>
</dbReference>
<dbReference type="InterPro" id="IPR013785">
    <property type="entry name" value="Aldolase_TIM"/>
</dbReference>
<dbReference type="InterPro" id="IPR011060">
    <property type="entry name" value="RibuloseP-bd_barrel"/>
</dbReference>
<dbReference type="InterPro" id="IPR018204">
    <property type="entry name" value="Trp_synthase_alpha_AS"/>
</dbReference>
<dbReference type="InterPro" id="IPR002028">
    <property type="entry name" value="Trp_synthase_suA"/>
</dbReference>
<dbReference type="NCBIfam" id="TIGR00262">
    <property type="entry name" value="trpA"/>
    <property type="match status" value="1"/>
</dbReference>
<dbReference type="PANTHER" id="PTHR43406:SF1">
    <property type="entry name" value="TRYPTOPHAN SYNTHASE ALPHA CHAIN, CHLOROPLASTIC"/>
    <property type="match status" value="1"/>
</dbReference>
<dbReference type="PANTHER" id="PTHR43406">
    <property type="entry name" value="TRYPTOPHAN SYNTHASE, ALPHA CHAIN"/>
    <property type="match status" value="1"/>
</dbReference>
<dbReference type="Pfam" id="PF00290">
    <property type="entry name" value="Trp_syntA"/>
    <property type="match status" value="1"/>
</dbReference>
<dbReference type="SUPFAM" id="SSF51366">
    <property type="entry name" value="Ribulose-phoshate binding barrel"/>
    <property type="match status" value="1"/>
</dbReference>
<dbReference type="PROSITE" id="PS00167">
    <property type="entry name" value="TRP_SYNTHASE_ALPHA"/>
    <property type="match status" value="1"/>
</dbReference>
<evidence type="ECO:0000255" key="1">
    <source>
        <dbReference type="HAMAP-Rule" id="MF_00131"/>
    </source>
</evidence>
<gene>
    <name evidence="1" type="primary">trpA</name>
    <name type="ordered locus">bbp_257</name>
</gene>
<protein>
    <recommendedName>
        <fullName evidence="1">Tryptophan synthase alpha chain</fullName>
        <ecNumber evidence="1">4.2.1.20</ecNumber>
    </recommendedName>
</protein>
<sequence length="269" mass="30079">MNNRYYQLNKNLIPYKLGCYIPFVVLGDPSIEISLEIIYSLIKNGADGLELGIPFSDPLADGPIIQQANLRAFSANITLTKCFEMLFKIRTHNPKIPIGILIYANLIFKLGIQKFYSICSKIDIDSVLIADVPIEESFEFEQHSIKNNIDSIFVCPPDASKNFLKKLSKHSTGYIYLLSRSGVTGIDMKITPPLKNFVKELKKLTSIPIIQGFGISNENQIKNIILSGVSGVICGSVIIQIIANNLNNKKIMLKKIKKLSNRFKKATII</sequence>
<name>TRPA_BUCBP</name>